<keyword id="KW-0028">Amino-acid biosynthesis</keyword>
<keyword id="KW-0963">Cytoplasm</keyword>
<keyword id="KW-0220">Diaminopimelate biosynthesis</keyword>
<keyword id="KW-0456">Lyase</keyword>
<keyword id="KW-0457">Lysine biosynthesis</keyword>
<keyword id="KW-0704">Schiff base</keyword>
<protein>
    <recommendedName>
        <fullName evidence="1">4-hydroxy-tetrahydrodipicolinate synthase</fullName>
        <shortName evidence="1">HTPA synthase</shortName>
        <ecNumber evidence="1">4.3.3.7</ecNumber>
    </recommendedName>
</protein>
<dbReference type="EC" id="4.3.3.7" evidence="1"/>
<dbReference type="EMBL" id="CP000517">
    <property type="protein sequence ID" value="ABX27021.1"/>
    <property type="molecule type" value="Genomic_DNA"/>
</dbReference>
<dbReference type="RefSeq" id="WP_012211732.1">
    <property type="nucleotide sequence ID" value="NC_010080.1"/>
</dbReference>
<dbReference type="SMR" id="A8YUT3"/>
<dbReference type="KEGG" id="lhe:lhv_0908"/>
<dbReference type="eggNOG" id="COG0329">
    <property type="taxonomic scope" value="Bacteria"/>
</dbReference>
<dbReference type="HOGENOM" id="CLU_049343_7_1_9"/>
<dbReference type="UniPathway" id="UPA00034">
    <property type="reaction ID" value="UER00017"/>
</dbReference>
<dbReference type="Proteomes" id="UP000000790">
    <property type="component" value="Chromosome"/>
</dbReference>
<dbReference type="GO" id="GO:0005829">
    <property type="term" value="C:cytosol"/>
    <property type="evidence" value="ECO:0007669"/>
    <property type="project" value="TreeGrafter"/>
</dbReference>
<dbReference type="GO" id="GO:0008840">
    <property type="term" value="F:4-hydroxy-tetrahydrodipicolinate synthase activity"/>
    <property type="evidence" value="ECO:0007669"/>
    <property type="project" value="UniProtKB-UniRule"/>
</dbReference>
<dbReference type="GO" id="GO:0019877">
    <property type="term" value="P:diaminopimelate biosynthetic process"/>
    <property type="evidence" value="ECO:0007669"/>
    <property type="project" value="UniProtKB-UniRule"/>
</dbReference>
<dbReference type="GO" id="GO:0009089">
    <property type="term" value="P:lysine biosynthetic process via diaminopimelate"/>
    <property type="evidence" value="ECO:0007669"/>
    <property type="project" value="UniProtKB-UniRule"/>
</dbReference>
<dbReference type="CDD" id="cd00950">
    <property type="entry name" value="DHDPS"/>
    <property type="match status" value="1"/>
</dbReference>
<dbReference type="Gene3D" id="3.20.20.70">
    <property type="entry name" value="Aldolase class I"/>
    <property type="match status" value="1"/>
</dbReference>
<dbReference type="HAMAP" id="MF_00418">
    <property type="entry name" value="DapA"/>
    <property type="match status" value="1"/>
</dbReference>
<dbReference type="InterPro" id="IPR013785">
    <property type="entry name" value="Aldolase_TIM"/>
</dbReference>
<dbReference type="InterPro" id="IPR005263">
    <property type="entry name" value="DapA"/>
</dbReference>
<dbReference type="InterPro" id="IPR002220">
    <property type="entry name" value="DapA-like"/>
</dbReference>
<dbReference type="InterPro" id="IPR020625">
    <property type="entry name" value="Schiff_base-form_aldolases_AS"/>
</dbReference>
<dbReference type="NCBIfam" id="TIGR00674">
    <property type="entry name" value="dapA"/>
    <property type="match status" value="1"/>
</dbReference>
<dbReference type="PANTHER" id="PTHR12128:SF66">
    <property type="entry name" value="4-HYDROXY-2-OXOGLUTARATE ALDOLASE, MITOCHONDRIAL"/>
    <property type="match status" value="1"/>
</dbReference>
<dbReference type="PANTHER" id="PTHR12128">
    <property type="entry name" value="DIHYDRODIPICOLINATE SYNTHASE"/>
    <property type="match status" value="1"/>
</dbReference>
<dbReference type="Pfam" id="PF00701">
    <property type="entry name" value="DHDPS"/>
    <property type="match status" value="1"/>
</dbReference>
<dbReference type="PIRSF" id="PIRSF001365">
    <property type="entry name" value="DHDPS"/>
    <property type="match status" value="1"/>
</dbReference>
<dbReference type="PRINTS" id="PR00146">
    <property type="entry name" value="DHPICSNTHASE"/>
</dbReference>
<dbReference type="SMART" id="SM01130">
    <property type="entry name" value="DHDPS"/>
    <property type="match status" value="1"/>
</dbReference>
<dbReference type="SUPFAM" id="SSF51569">
    <property type="entry name" value="Aldolase"/>
    <property type="match status" value="1"/>
</dbReference>
<dbReference type="PROSITE" id="PS00666">
    <property type="entry name" value="DHDPS_2"/>
    <property type="match status" value="1"/>
</dbReference>
<name>DAPA_LACH4</name>
<sequence>MATLIDADLLTAIVTPFDENKKIDFDSLKKLTNYLIDQGCNGFVIGGTTGETPTLTHDEKIELYKQFGQIVNGRAVVIAGTGSNNTAETIKFTNEVAEIDGIDYALVVVPPYNKPNQRSMVAHFTAVNDNVKMPFLIYNIPGRTGVRMEKETVVQLSQLDNIKGIKQCASLEEMEYIIDHKAAGFQVFTGEDTQALTARLLGANGVVSVASHIYTKEMRRMYDALYEGKYPEAAKIQRWLTLRMQALFMYPSPSPVKAVLNAQGFETGDCRLPLVALNDEEKVTLAQHLGLEDNALLQKLPLDLGKDLEND</sequence>
<feature type="chain" id="PRO_0000340962" description="4-hydroxy-tetrahydrodipicolinate synthase">
    <location>
        <begin position="1"/>
        <end position="311"/>
    </location>
</feature>
<feature type="active site" description="Proton donor/acceptor" evidence="1">
    <location>
        <position position="138"/>
    </location>
</feature>
<feature type="active site" description="Schiff-base intermediate with substrate" evidence="1">
    <location>
        <position position="166"/>
    </location>
</feature>
<feature type="binding site" evidence="1">
    <location>
        <position position="49"/>
    </location>
    <ligand>
        <name>pyruvate</name>
        <dbReference type="ChEBI" id="CHEBI:15361"/>
    </ligand>
</feature>
<feature type="binding site" evidence="1">
    <location>
        <position position="207"/>
    </location>
    <ligand>
        <name>pyruvate</name>
        <dbReference type="ChEBI" id="CHEBI:15361"/>
    </ligand>
</feature>
<feature type="site" description="Part of a proton relay during catalysis" evidence="1">
    <location>
        <position position="48"/>
    </location>
</feature>
<feature type="site" description="Part of a proton relay during catalysis" evidence="1">
    <location>
        <position position="112"/>
    </location>
</feature>
<gene>
    <name evidence="1" type="primary">dapA</name>
    <name type="ordered locus">lhv_0908</name>
</gene>
<comment type="function">
    <text evidence="1">Catalyzes the condensation of (S)-aspartate-beta-semialdehyde [(S)-ASA] and pyruvate to 4-hydroxy-tetrahydrodipicolinate (HTPA).</text>
</comment>
<comment type="catalytic activity">
    <reaction evidence="1">
        <text>L-aspartate 4-semialdehyde + pyruvate = (2S,4S)-4-hydroxy-2,3,4,5-tetrahydrodipicolinate + H2O + H(+)</text>
        <dbReference type="Rhea" id="RHEA:34171"/>
        <dbReference type="ChEBI" id="CHEBI:15361"/>
        <dbReference type="ChEBI" id="CHEBI:15377"/>
        <dbReference type="ChEBI" id="CHEBI:15378"/>
        <dbReference type="ChEBI" id="CHEBI:67139"/>
        <dbReference type="ChEBI" id="CHEBI:537519"/>
        <dbReference type="EC" id="4.3.3.7"/>
    </reaction>
</comment>
<comment type="pathway">
    <text evidence="1">Amino-acid biosynthesis; L-lysine biosynthesis via DAP pathway; (S)-tetrahydrodipicolinate from L-aspartate: step 3/4.</text>
</comment>
<comment type="subunit">
    <text evidence="1">Homotetramer; dimer of dimers.</text>
</comment>
<comment type="subcellular location">
    <subcellularLocation>
        <location evidence="1">Cytoplasm</location>
    </subcellularLocation>
</comment>
<comment type="similarity">
    <text evidence="1">Belongs to the DapA family.</text>
</comment>
<comment type="caution">
    <text evidence="2">Was originally thought to be a dihydrodipicolinate synthase (DHDPS), catalyzing the condensation of (S)-aspartate-beta-semialdehyde [(S)-ASA] and pyruvate to dihydrodipicolinate (DHDP). However, it was shown in E.coli that the product of the enzymatic reaction is not dihydrodipicolinate but in fact (4S)-4-hydroxy-2,3,4,5-tetrahydro-(2S)-dipicolinic acid (HTPA), and that the consecutive dehydration reaction leading to DHDP is not spontaneous but catalyzed by DapB.</text>
</comment>
<proteinExistence type="inferred from homology"/>
<reference key="1">
    <citation type="journal article" date="2008" name="J. Bacteriol.">
        <title>Genome sequence of Lactobacillus helveticus: an organism distinguished by selective gene loss and IS element expansion.</title>
        <authorList>
            <person name="Callanan M."/>
            <person name="Kaleta P."/>
            <person name="O'Callaghan J."/>
            <person name="O'Sullivan O."/>
            <person name="Jordan K."/>
            <person name="McAuliffe O."/>
            <person name="Sangrador-Vegas A."/>
            <person name="Slattery L."/>
            <person name="Fitzgerald G.F."/>
            <person name="Beresford T."/>
            <person name="Ross R.P."/>
        </authorList>
    </citation>
    <scope>NUCLEOTIDE SEQUENCE [LARGE SCALE GENOMIC DNA]</scope>
    <source>
        <strain>DPC 4571</strain>
    </source>
</reference>
<accession>A8YUT3</accession>
<evidence type="ECO:0000255" key="1">
    <source>
        <dbReference type="HAMAP-Rule" id="MF_00418"/>
    </source>
</evidence>
<evidence type="ECO:0000305" key="2"/>
<organism>
    <name type="scientific">Lactobacillus helveticus (strain DPC 4571)</name>
    <dbReference type="NCBI Taxonomy" id="405566"/>
    <lineage>
        <taxon>Bacteria</taxon>
        <taxon>Bacillati</taxon>
        <taxon>Bacillota</taxon>
        <taxon>Bacilli</taxon>
        <taxon>Lactobacillales</taxon>
        <taxon>Lactobacillaceae</taxon>
        <taxon>Lactobacillus</taxon>
    </lineage>
</organism>